<organism>
    <name type="scientific">Cyanothece sp. (strain PCC 7425 / ATCC 29141)</name>
    <dbReference type="NCBI Taxonomy" id="395961"/>
    <lineage>
        <taxon>Bacteria</taxon>
        <taxon>Bacillati</taxon>
        <taxon>Cyanobacteriota</taxon>
        <taxon>Cyanophyceae</taxon>
        <taxon>Gomontiellales</taxon>
        <taxon>Cyanothecaceae</taxon>
        <taxon>Cyanothece</taxon>
    </lineage>
</organism>
<name>RS13_CYAP4</name>
<proteinExistence type="inferred from homology"/>
<gene>
    <name evidence="1" type="primary">rpsM</name>
    <name evidence="1" type="synonym">rps13</name>
    <name type="ordered locus">Cyan7425_1314</name>
</gene>
<dbReference type="EMBL" id="CP001344">
    <property type="protein sequence ID" value="ACL43691.1"/>
    <property type="molecule type" value="Genomic_DNA"/>
</dbReference>
<dbReference type="SMR" id="B8HMS6"/>
<dbReference type="STRING" id="395961.Cyan7425_1314"/>
<dbReference type="KEGG" id="cyn:Cyan7425_1314"/>
<dbReference type="eggNOG" id="COG0099">
    <property type="taxonomic scope" value="Bacteria"/>
</dbReference>
<dbReference type="HOGENOM" id="CLU_103849_1_2_3"/>
<dbReference type="OrthoDB" id="9803610at2"/>
<dbReference type="GO" id="GO:0005829">
    <property type="term" value="C:cytosol"/>
    <property type="evidence" value="ECO:0007669"/>
    <property type="project" value="TreeGrafter"/>
</dbReference>
<dbReference type="GO" id="GO:0015935">
    <property type="term" value="C:small ribosomal subunit"/>
    <property type="evidence" value="ECO:0007669"/>
    <property type="project" value="TreeGrafter"/>
</dbReference>
<dbReference type="GO" id="GO:0019843">
    <property type="term" value="F:rRNA binding"/>
    <property type="evidence" value="ECO:0007669"/>
    <property type="project" value="UniProtKB-UniRule"/>
</dbReference>
<dbReference type="GO" id="GO:0003735">
    <property type="term" value="F:structural constituent of ribosome"/>
    <property type="evidence" value="ECO:0007669"/>
    <property type="project" value="InterPro"/>
</dbReference>
<dbReference type="GO" id="GO:0000049">
    <property type="term" value="F:tRNA binding"/>
    <property type="evidence" value="ECO:0007669"/>
    <property type="project" value="UniProtKB-UniRule"/>
</dbReference>
<dbReference type="GO" id="GO:0006412">
    <property type="term" value="P:translation"/>
    <property type="evidence" value="ECO:0007669"/>
    <property type="project" value="UniProtKB-UniRule"/>
</dbReference>
<dbReference type="FunFam" id="1.10.8.50:FF:000001">
    <property type="entry name" value="30S ribosomal protein S13"/>
    <property type="match status" value="1"/>
</dbReference>
<dbReference type="FunFam" id="4.10.910.10:FF:000001">
    <property type="entry name" value="30S ribosomal protein S13"/>
    <property type="match status" value="1"/>
</dbReference>
<dbReference type="Gene3D" id="1.10.8.50">
    <property type="match status" value="1"/>
</dbReference>
<dbReference type="Gene3D" id="4.10.910.10">
    <property type="entry name" value="30s ribosomal protein s13, domain 2"/>
    <property type="match status" value="1"/>
</dbReference>
<dbReference type="HAMAP" id="MF_01315">
    <property type="entry name" value="Ribosomal_uS13"/>
    <property type="match status" value="1"/>
</dbReference>
<dbReference type="InterPro" id="IPR027437">
    <property type="entry name" value="Rbsml_uS13_C"/>
</dbReference>
<dbReference type="InterPro" id="IPR001892">
    <property type="entry name" value="Ribosomal_uS13"/>
</dbReference>
<dbReference type="InterPro" id="IPR010979">
    <property type="entry name" value="Ribosomal_uS13-like_H2TH"/>
</dbReference>
<dbReference type="InterPro" id="IPR019980">
    <property type="entry name" value="Ribosomal_uS13_bac-type"/>
</dbReference>
<dbReference type="InterPro" id="IPR018269">
    <property type="entry name" value="Ribosomal_uS13_CS"/>
</dbReference>
<dbReference type="NCBIfam" id="TIGR03631">
    <property type="entry name" value="uS13_bact"/>
    <property type="match status" value="1"/>
</dbReference>
<dbReference type="PANTHER" id="PTHR10871">
    <property type="entry name" value="30S RIBOSOMAL PROTEIN S13/40S RIBOSOMAL PROTEIN S18"/>
    <property type="match status" value="1"/>
</dbReference>
<dbReference type="PANTHER" id="PTHR10871:SF1">
    <property type="entry name" value="SMALL RIBOSOMAL SUBUNIT PROTEIN US13M"/>
    <property type="match status" value="1"/>
</dbReference>
<dbReference type="Pfam" id="PF00416">
    <property type="entry name" value="Ribosomal_S13"/>
    <property type="match status" value="1"/>
</dbReference>
<dbReference type="PIRSF" id="PIRSF002134">
    <property type="entry name" value="Ribosomal_S13"/>
    <property type="match status" value="1"/>
</dbReference>
<dbReference type="SUPFAM" id="SSF46946">
    <property type="entry name" value="S13-like H2TH domain"/>
    <property type="match status" value="1"/>
</dbReference>
<dbReference type="PROSITE" id="PS00646">
    <property type="entry name" value="RIBOSOMAL_S13_1"/>
    <property type="match status" value="1"/>
</dbReference>
<dbReference type="PROSITE" id="PS50159">
    <property type="entry name" value="RIBOSOMAL_S13_2"/>
    <property type="match status" value="1"/>
</dbReference>
<reference key="1">
    <citation type="journal article" date="2011" name="MBio">
        <title>Novel metabolic attributes of the genus Cyanothece, comprising a group of unicellular nitrogen-fixing Cyanobacteria.</title>
        <authorList>
            <person name="Bandyopadhyay A."/>
            <person name="Elvitigala T."/>
            <person name="Welsh E."/>
            <person name="Stockel J."/>
            <person name="Liberton M."/>
            <person name="Min H."/>
            <person name="Sherman L.A."/>
            <person name="Pakrasi H.B."/>
        </authorList>
    </citation>
    <scope>NUCLEOTIDE SEQUENCE [LARGE SCALE GENOMIC DNA]</scope>
    <source>
        <strain>PCC 7425 / ATCC 29141</strain>
    </source>
</reference>
<protein>
    <recommendedName>
        <fullName evidence="1">Small ribosomal subunit protein uS13</fullName>
    </recommendedName>
    <alternativeName>
        <fullName evidence="3">30S ribosomal protein S13</fullName>
    </alternativeName>
</protein>
<feature type="chain" id="PRO_1000165617" description="Small ribosomal subunit protein uS13">
    <location>
        <begin position="1"/>
        <end position="126"/>
    </location>
</feature>
<feature type="region of interest" description="Disordered" evidence="2">
    <location>
        <begin position="92"/>
        <end position="126"/>
    </location>
</feature>
<feature type="compositionally biased region" description="Basic residues" evidence="2">
    <location>
        <begin position="100"/>
        <end position="126"/>
    </location>
</feature>
<sequence length="126" mass="14265">MARIAGVDLPRDKRVEIGLTYIYGIGLTRSQHILAETGVNPDTRIRELTDADISALRTAVEAYQVEGDLRRLENMNIKRLQDIGCYRGRRHRMGLPVRGQRTRTNARTRRGGRRTVAGKKKAPAKK</sequence>
<keyword id="KW-0687">Ribonucleoprotein</keyword>
<keyword id="KW-0689">Ribosomal protein</keyword>
<keyword id="KW-0694">RNA-binding</keyword>
<keyword id="KW-0699">rRNA-binding</keyword>
<keyword id="KW-0820">tRNA-binding</keyword>
<evidence type="ECO:0000255" key="1">
    <source>
        <dbReference type="HAMAP-Rule" id="MF_01315"/>
    </source>
</evidence>
<evidence type="ECO:0000256" key="2">
    <source>
        <dbReference type="SAM" id="MobiDB-lite"/>
    </source>
</evidence>
<evidence type="ECO:0000305" key="3"/>
<comment type="function">
    <text evidence="1">Located at the top of the head of the 30S subunit, it contacts several helices of the 16S rRNA. In the 70S ribosome it contacts the 23S rRNA (bridge B1a) and protein L5 of the 50S subunit (bridge B1b), connecting the 2 subunits; these bridges are implicated in subunit movement. Contacts the tRNAs in the A and P-sites.</text>
</comment>
<comment type="subunit">
    <text evidence="1">Part of the 30S ribosomal subunit. Forms a loose heterodimer with protein S19. Forms two bridges to the 50S subunit in the 70S ribosome.</text>
</comment>
<comment type="similarity">
    <text evidence="1">Belongs to the universal ribosomal protein uS13 family.</text>
</comment>
<accession>B8HMS6</accession>